<reference key="1">
    <citation type="journal article" date="2007" name="J. Bacteriol.">
        <title>Genome sequence of Avery's virulent serotype 2 strain D39 of Streptococcus pneumoniae and comparison with that of unencapsulated laboratory strain R6.</title>
        <authorList>
            <person name="Lanie J.A."/>
            <person name="Ng W.-L."/>
            <person name="Kazmierczak K.M."/>
            <person name="Andrzejewski T.M."/>
            <person name="Davidsen T.M."/>
            <person name="Wayne K.J."/>
            <person name="Tettelin H."/>
            <person name="Glass J.I."/>
            <person name="Winkler M.E."/>
        </authorList>
    </citation>
    <scope>NUCLEOTIDE SEQUENCE [LARGE SCALE GENOMIC DNA]</scope>
    <source>
        <strain>D39 / NCTC 7466</strain>
    </source>
</reference>
<accession>Q04MM7</accession>
<evidence type="ECO:0000255" key="1">
    <source>
        <dbReference type="HAMAP-Rule" id="MF_01345"/>
    </source>
</evidence>
<evidence type="ECO:0000305" key="2"/>
<protein>
    <recommendedName>
        <fullName evidence="1">Small ribosomal subunit protein uS17</fullName>
    </recommendedName>
    <alternativeName>
        <fullName evidence="2">30S ribosomal protein S17</fullName>
    </alternativeName>
</protein>
<comment type="function">
    <text evidence="1">One of the primary rRNA binding proteins, it binds specifically to the 5'-end of 16S ribosomal RNA.</text>
</comment>
<comment type="subunit">
    <text evidence="1">Part of the 30S ribosomal subunit.</text>
</comment>
<comment type="similarity">
    <text evidence="1">Belongs to the universal ribosomal protein uS17 family.</text>
</comment>
<feature type="chain" id="PRO_1000055030" description="Small ribosomal subunit protein uS17">
    <location>
        <begin position="1"/>
        <end position="86"/>
    </location>
</feature>
<keyword id="KW-1185">Reference proteome</keyword>
<keyword id="KW-0687">Ribonucleoprotein</keyword>
<keyword id="KW-0689">Ribosomal protein</keyword>
<keyword id="KW-0694">RNA-binding</keyword>
<keyword id="KW-0699">rRNA-binding</keyword>
<proteinExistence type="inferred from homology"/>
<dbReference type="EMBL" id="CP000410">
    <property type="protein sequence ID" value="ABJ54151.1"/>
    <property type="molecule type" value="Genomic_DNA"/>
</dbReference>
<dbReference type="RefSeq" id="WP_000440801.1">
    <property type="nucleotide sequence ID" value="NZ_JAMLJR010000002.1"/>
</dbReference>
<dbReference type="SMR" id="Q04MM7"/>
<dbReference type="PaxDb" id="373153-SPD_0202"/>
<dbReference type="GeneID" id="93920913"/>
<dbReference type="KEGG" id="spd:SPD_0202"/>
<dbReference type="eggNOG" id="COG0186">
    <property type="taxonomic scope" value="Bacteria"/>
</dbReference>
<dbReference type="HOGENOM" id="CLU_073626_1_0_9"/>
<dbReference type="BioCyc" id="SPNE373153:G1G6V-225-MONOMER"/>
<dbReference type="Proteomes" id="UP000001452">
    <property type="component" value="Chromosome"/>
</dbReference>
<dbReference type="GO" id="GO:0022627">
    <property type="term" value="C:cytosolic small ribosomal subunit"/>
    <property type="evidence" value="ECO:0007669"/>
    <property type="project" value="TreeGrafter"/>
</dbReference>
<dbReference type="GO" id="GO:0019843">
    <property type="term" value="F:rRNA binding"/>
    <property type="evidence" value="ECO:0007669"/>
    <property type="project" value="UniProtKB-UniRule"/>
</dbReference>
<dbReference type="GO" id="GO:0003735">
    <property type="term" value="F:structural constituent of ribosome"/>
    <property type="evidence" value="ECO:0007669"/>
    <property type="project" value="InterPro"/>
</dbReference>
<dbReference type="GO" id="GO:0006412">
    <property type="term" value="P:translation"/>
    <property type="evidence" value="ECO:0007669"/>
    <property type="project" value="UniProtKB-UniRule"/>
</dbReference>
<dbReference type="CDD" id="cd00364">
    <property type="entry name" value="Ribosomal_uS17"/>
    <property type="match status" value="1"/>
</dbReference>
<dbReference type="FunFam" id="2.40.50.140:FF:000026">
    <property type="entry name" value="30S ribosomal protein S17"/>
    <property type="match status" value="1"/>
</dbReference>
<dbReference type="Gene3D" id="2.40.50.140">
    <property type="entry name" value="Nucleic acid-binding proteins"/>
    <property type="match status" value="1"/>
</dbReference>
<dbReference type="HAMAP" id="MF_01345_B">
    <property type="entry name" value="Ribosomal_uS17_B"/>
    <property type="match status" value="1"/>
</dbReference>
<dbReference type="InterPro" id="IPR012340">
    <property type="entry name" value="NA-bd_OB-fold"/>
</dbReference>
<dbReference type="InterPro" id="IPR000266">
    <property type="entry name" value="Ribosomal_uS17"/>
</dbReference>
<dbReference type="InterPro" id="IPR019984">
    <property type="entry name" value="Ribosomal_uS17_bact/chlr"/>
</dbReference>
<dbReference type="InterPro" id="IPR019979">
    <property type="entry name" value="Ribosomal_uS17_CS"/>
</dbReference>
<dbReference type="NCBIfam" id="NF004123">
    <property type="entry name" value="PRK05610.1"/>
    <property type="match status" value="1"/>
</dbReference>
<dbReference type="NCBIfam" id="TIGR03635">
    <property type="entry name" value="uS17_bact"/>
    <property type="match status" value="1"/>
</dbReference>
<dbReference type="PANTHER" id="PTHR10744">
    <property type="entry name" value="40S RIBOSOMAL PROTEIN S11 FAMILY MEMBER"/>
    <property type="match status" value="1"/>
</dbReference>
<dbReference type="PANTHER" id="PTHR10744:SF1">
    <property type="entry name" value="SMALL RIBOSOMAL SUBUNIT PROTEIN US17M"/>
    <property type="match status" value="1"/>
</dbReference>
<dbReference type="Pfam" id="PF00366">
    <property type="entry name" value="Ribosomal_S17"/>
    <property type="match status" value="1"/>
</dbReference>
<dbReference type="PRINTS" id="PR00973">
    <property type="entry name" value="RIBOSOMALS17"/>
</dbReference>
<dbReference type="SUPFAM" id="SSF50249">
    <property type="entry name" value="Nucleic acid-binding proteins"/>
    <property type="match status" value="1"/>
</dbReference>
<dbReference type="PROSITE" id="PS00056">
    <property type="entry name" value="RIBOSOMAL_S17"/>
    <property type="match status" value="1"/>
</dbReference>
<name>RS17_STRP2</name>
<sequence>MERNNRKVLVGRVVSDKMDKTITVVVETKRNHPVYGKRINYSKKYKAHDENNVAKEGDIVRIMETRPLSATKRFRLVEVVEEAVII</sequence>
<organism>
    <name type="scientific">Streptococcus pneumoniae serotype 2 (strain D39 / NCTC 7466)</name>
    <dbReference type="NCBI Taxonomy" id="373153"/>
    <lineage>
        <taxon>Bacteria</taxon>
        <taxon>Bacillati</taxon>
        <taxon>Bacillota</taxon>
        <taxon>Bacilli</taxon>
        <taxon>Lactobacillales</taxon>
        <taxon>Streptococcaceae</taxon>
        <taxon>Streptococcus</taxon>
    </lineage>
</organism>
<gene>
    <name evidence="1" type="primary">rpsQ</name>
    <name type="ordered locus">SPD_0202</name>
</gene>